<keyword id="KW-0131">Cell cycle</keyword>
<keyword id="KW-0132">Cell division</keyword>
<keyword id="KW-0195">Cyclin</keyword>
<keyword id="KW-1185">Reference proteome</keyword>
<dbReference type="EMBL" id="AB045126">
    <property type="protein sequence ID" value="BAB16401.1"/>
    <property type="molecule type" value="mRNA"/>
</dbReference>
<dbReference type="EMBL" id="CU329670">
    <property type="protein sequence ID" value="CAC35180.2"/>
    <property type="molecule type" value="Genomic_DNA"/>
</dbReference>
<dbReference type="PIR" id="T38928">
    <property type="entry name" value="T38928"/>
</dbReference>
<dbReference type="RefSeq" id="XP_001713050.1">
    <property type="nucleotide sequence ID" value="XM_001712998.2"/>
</dbReference>
<dbReference type="SMR" id="P87049"/>
<dbReference type="BioGRID" id="280482">
    <property type="interactions" value="11"/>
</dbReference>
<dbReference type="FunCoup" id="P87049">
    <property type="interactions" value="6"/>
</dbReference>
<dbReference type="STRING" id="284812.P87049"/>
<dbReference type="iPTMnet" id="P87049"/>
<dbReference type="PaxDb" id="4896-SPAC19E9.03.1"/>
<dbReference type="EnsemblFungi" id="SPAC19E9.03.1">
    <property type="protein sequence ID" value="SPAC19E9.03.1:pep"/>
    <property type="gene ID" value="SPAC19E9.03"/>
</dbReference>
<dbReference type="PomBase" id="SPAC19E9.03">
    <property type="gene designation" value="pas1"/>
</dbReference>
<dbReference type="VEuPathDB" id="FungiDB:SPAC19E9.03"/>
<dbReference type="eggNOG" id="KOG1674">
    <property type="taxonomic scope" value="Eukaryota"/>
</dbReference>
<dbReference type="HOGENOM" id="CLU_672946_0_0_1"/>
<dbReference type="InParanoid" id="P87049"/>
<dbReference type="PRO" id="PR:P87049"/>
<dbReference type="Proteomes" id="UP000002485">
    <property type="component" value="Chromosome I"/>
</dbReference>
<dbReference type="GO" id="GO:0000307">
    <property type="term" value="C:cyclin-dependent protein kinase holoenzyme complex"/>
    <property type="evidence" value="ECO:0000318"/>
    <property type="project" value="GO_Central"/>
</dbReference>
<dbReference type="GO" id="GO:0005634">
    <property type="term" value="C:nucleus"/>
    <property type="evidence" value="ECO:0000318"/>
    <property type="project" value="GO_Central"/>
</dbReference>
<dbReference type="GO" id="GO:0016538">
    <property type="term" value="F:cyclin-dependent protein serine/threonine kinase regulator activity"/>
    <property type="evidence" value="ECO:0000318"/>
    <property type="project" value="GO_Central"/>
</dbReference>
<dbReference type="GO" id="GO:0019901">
    <property type="term" value="F:protein kinase binding"/>
    <property type="evidence" value="ECO:0007669"/>
    <property type="project" value="InterPro"/>
</dbReference>
<dbReference type="GO" id="GO:0051301">
    <property type="term" value="P:cell division"/>
    <property type="evidence" value="ECO:0007669"/>
    <property type="project" value="UniProtKB-KW"/>
</dbReference>
<dbReference type="GO" id="GO:2000134">
    <property type="term" value="P:negative regulation of G1/S transition of mitotic cell cycle"/>
    <property type="evidence" value="ECO:0000315"/>
    <property type="project" value="PomBase"/>
</dbReference>
<dbReference type="GO" id="GO:0045875">
    <property type="term" value="P:negative regulation of sister chromatid cohesion"/>
    <property type="evidence" value="ECO:0000316"/>
    <property type="project" value="PomBase"/>
</dbReference>
<dbReference type="GO" id="GO:1905589">
    <property type="term" value="P:positive regulation of L-arginine import across plasma membrane"/>
    <property type="evidence" value="ECO:0000315"/>
    <property type="project" value="PomBase"/>
</dbReference>
<dbReference type="GO" id="GO:1905534">
    <property type="term" value="P:positive regulation of L-leucine import across plasma membrane"/>
    <property type="evidence" value="ECO:0000315"/>
    <property type="project" value="PomBase"/>
</dbReference>
<dbReference type="GO" id="GO:2000045">
    <property type="term" value="P:regulation of G1/S transition of mitotic cell cycle"/>
    <property type="evidence" value="ECO:0000316"/>
    <property type="project" value="PomBase"/>
</dbReference>
<dbReference type="GO" id="GO:0007165">
    <property type="term" value="P:signal transduction"/>
    <property type="evidence" value="ECO:0000305"/>
    <property type="project" value="PomBase"/>
</dbReference>
<dbReference type="GO" id="GO:0007089">
    <property type="term" value="P:traversing start control point of mitotic cell cycle"/>
    <property type="evidence" value="ECO:0000316"/>
    <property type="project" value="PomBase"/>
</dbReference>
<dbReference type="CDD" id="cd20557">
    <property type="entry name" value="CYCLIN_ScPCL1-like"/>
    <property type="match status" value="1"/>
</dbReference>
<dbReference type="Gene3D" id="1.10.472.10">
    <property type="entry name" value="Cyclin-like"/>
    <property type="match status" value="1"/>
</dbReference>
<dbReference type="InterPro" id="IPR036915">
    <property type="entry name" value="Cyclin-like_sf"/>
</dbReference>
<dbReference type="InterPro" id="IPR013922">
    <property type="entry name" value="Cyclin_PHO80-like"/>
</dbReference>
<dbReference type="PANTHER" id="PTHR15615">
    <property type="match status" value="1"/>
</dbReference>
<dbReference type="PANTHER" id="PTHR15615:SF36">
    <property type="entry name" value="PHO85 CYCLIN-5"/>
    <property type="match status" value="1"/>
</dbReference>
<dbReference type="Pfam" id="PF08613">
    <property type="entry name" value="Cyclin"/>
    <property type="match status" value="1"/>
</dbReference>
<dbReference type="SUPFAM" id="SSF47954">
    <property type="entry name" value="Cyclin-like"/>
    <property type="match status" value="1"/>
</dbReference>
<evidence type="ECO:0000256" key="1">
    <source>
        <dbReference type="SAM" id="MobiDB-lite"/>
    </source>
</evidence>
<evidence type="ECO:0000305" key="2"/>
<gene>
    <name type="primary">pas1</name>
    <name type="ORF">SPAC19E9.03</name>
    <name type="ORF">SPAC57A10.01</name>
</gene>
<organism>
    <name type="scientific">Schizosaccharomyces pombe (strain 972 / ATCC 24843)</name>
    <name type="common">Fission yeast</name>
    <dbReference type="NCBI Taxonomy" id="284812"/>
    <lineage>
        <taxon>Eukaryota</taxon>
        <taxon>Fungi</taxon>
        <taxon>Dikarya</taxon>
        <taxon>Ascomycota</taxon>
        <taxon>Taphrinomycotina</taxon>
        <taxon>Schizosaccharomycetes</taxon>
        <taxon>Schizosaccharomycetales</taxon>
        <taxon>Schizosaccharomycetaceae</taxon>
        <taxon>Schizosaccharomyces</taxon>
    </lineage>
</organism>
<feature type="chain" id="PRO_0000080506" description="G1/S-specific cyclin pas1">
    <location>
        <begin position="1"/>
        <end position="411"/>
    </location>
</feature>
<feature type="region of interest" description="Disordered" evidence="1">
    <location>
        <begin position="210"/>
        <end position="253"/>
    </location>
</feature>
<feature type="region of interest" description="Disordered" evidence="1">
    <location>
        <begin position="307"/>
        <end position="326"/>
    </location>
</feature>
<feature type="compositionally biased region" description="Low complexity" evidence="1">
    <location>
        <begin position="218"/>
        <end position="252"/>
    </location>
</feature>
<comment type="function">
    <text>Essential for the control of the cell cycle at the G1/S (start) transition. Interacts with the pef1 protein kinase. The pef1/pas1 complex activates the res2/cdc10 complex.</text>
</comment>
<comment type="similarity">
    <text evidence="2">Belongs to the cyclin family.</text>
</comment>
<name>CGP1_SCHPO</name>
<protein>
    <recommendedName>
        <fullName>G1/S-specific cyclin pas1</fullName>
    </recommendedName>
</protein>
<accession>P87049</accession>
<accession>O13840</accession>
<accession>Q9HGI0</accession>
<reference key="1">
    <citation type="journal article" date="2000" name="Mol. Biol. Cell">
        <title>A pcl-like cyclin activates the Res2p-Cdc10p cell cycle 'start' transcriptional factor complex in fission yeast.</title>
        <authorList>
            <person name="Tanaka K."/>
            <person name="Okayama H."/>
        </authorList>
    </citation>
    <scope>NUCLEOTIDE SEQUENCE [MRNA]</scope>
    <source>
        <strain>972 / ATCC 24843</strain>
    </source>
</reference>
<reference key="2">
    <citation type="journal article" date="2002" name="Nature">
        <title>The genome sequence of Schizosaccharomyces pombe.</title>
        <authorList>
            <person name="Wood V."/>
            <person name="Gwilliam R."/>
            <person name="Rajandream M.A."/>
            <person name="Lyne M.H."/>
            <person name="Lyne R."/>
            <person name="Stewart A."/>
            <person name="Sgouros J.G."/>
            <person name="Peat N."/>
            <person name="Hayles J."/>
            <person name="Baker S.G."/>
            <person name="Basham D."/>
            <person name="Bowman S."/>
            <person name="Brooks K."/>
            <person name="Brown D."/>
            <person name="Brown S."/>
            <person name="Chillingworth T."/>
            <person name="Churcher C.M."/>
            <person name="Collins M."/>
            <person name="Connor R."/>
            <person name="Cronin A."/>
            <person name="Davis P."/>
            <person name="Feltwell T."/>
            <person name="Fraser A."/>
            <person name="Gentles S."/>
            <person name="Goble A."/>
            <person name="Hamlin N."/>
            <person name="Harris D.E."/>
            <person name="Hidalgo J."/>
            <person name="Hodgson G."/>
            <person name="Holroyd S."/>
            <person name="Hornsby T."/>
            <person name="Howarth S."/>
            <person name="Huckle E.J."/>
            <person name="Hunt S."/>
            <person name="Jagels K."/>
            <person name="James K.D."/>
            <person name="Jones L."/>
            <person name="Jones M."/>
            <person name="Leather S."/>
            <person name="McDonald S."/>
            <person name="McLean J."/>
            <person name="Mooney P."/>
            <person name="Moule S."/>
            <person name="Mungall K.L."/>
            <person name="Murphy L.D."/>
            <person name="Niblett D."/>
            <person name="Odell C."/>
            <person name="Oliver K."/>
            <person name="O'Neil S."/>
            <person name="Pearson D."/>
            <person name="Quail M.A."/>
            <person name="Rabbinowitsch E."/>
            <person name="Rutherford K.M."/>
            <person name="Rutter S."/>
            <person name="Saunders D."/>
            <person name="Seeger K."/>
            <person name="Sharp S."/>
            <person name="Skelton J."/>
            <person name="Simmonds M.N."/>
            <person name="Squares R."/>
            <person name="Squares S."/>
            <person name="Stevens K."/>
            <person name="Taylor K."/>
            <person name="Taylor R.G."/>
            <person name="Tivey A."/>
            <person name="Walsh S.V."/>
            <person name="Warren T."/>
            <person name="Whitehead S."/>
            <person name="Woodward J.R."/>
            <person name="Volckaert G."/>
            <person name="Aert R."/>
            <person name="Robben J."/>
            <person name="Grymonprez B."/>
            <person name="Weltjens I."/>
            <person name="Vanstreels E."/>
            <person name="Rieger M."/>
            <person name="Schaefer M."/>
            <person name="Mueller-Auer S."/>
            <person name="Gabel C."/>
            <person name="Fuchs M."/>
            <person name="Duesterhoeft A."/>
            <person name="Fritzc C."/>
            <person name="Holzer E."/>
            <person name="Moestl D."/>
            <person name="Hilbert H."/>
            <person name="Borzym K."/>
            <person name="Langer I."/>
            <person name="Beck A."/>
            <person name="Lehrach H."/>
            <person name="Reinhardt R."/>
            <person name="Pohl T.M."/>
            <person name="Eger P."/>
            <person name="Zimmermann W."/>
            <person name="Wedler H."/>
            <person name="Wambutt R."/>
            <person name="Purnelle B."/>
            <person name="Goffeau A."/>
            <person name="Cadieu E."/>
            <person name="Dreano S."/>
            <person name="Gloux S."/>
            <person name="Lelaure V."/>
            <person name="Mottier S."/>
            <person name="Galibert F."/>
            <person name="Aves S.J."/>
            <person name="Xiang Z."/>
            <person name="Hunt C."/>
            <person name="Moore K."/>
            <person name="Hurst S.M."/>
            <person name="Lucas M."/>
            <person name="Rochet M."/>
            <person name="Gaillardin C."/>
            <person name="Tallada V.A."/>
            <person name="Garzon A."/>
            <person name="Thode G."/>
            <person name="Daga R.R."/>
            <person name="Cruzado L."/>
            <person name="Jimenez J."/>
            <person name="Sanchez M."/>
            <person name="del Rey F."/>
            <person name="Benito J."/>
            <person name="Dominguez A."/>
            <person name="Revuelta J.L."/>
            <person name="Moreno S."/>
            <person name="Armstrong J."/>
            <person name="Forsburg S.L."/>
            <person name="Cerutti L."/>
            <person name="Lowe T."/>
            <person name="McCombie W.R."/>
            <person name="Paulsen I."/>
            <person name="Potashkin J."/>
            <person name="Shpakovski G.V."/>
            <person name="Ussery D."/>
            <person name="Barrell B.G."/>
            <person name="Nurse P."/>
        </authorList>
    </citation>
    <scope>NUCLEOTIDE SEQUENCE [LARGE SCALE GENOMIC DNA]</scope>
    <source>
        <strain>972 / ATCC 24843</strain>
    </source>
</reference>
<proteinExistence type="evidence at transcript level"/>
<sequence>MSKVNMRALLESFSTVILSIYPLAKSTNQQSHSHSLSLTQFLYETIRRSRVDYTTLLLALYYFIRFRDAASSKPTNYIPLLCGRRLFLVCLMAATKFLQDRSFSNRAWSRLSGLPVDKLLVLEYMFYQCIDYRLVVPKHIFARWSLLVGECCAHATARYDSTDPNVASFGSVAQYWVSLFSNVQSSLDDLFSIACLTKIAHRRMNANAALKNQATRKPSSSPQTTQDSSPILTMAPSTPVSVGSTPPSTPSVLPIAKQLAPMNVCKAHIQASNQSRTLTTASPPEQIPLMEPQVYVNPQVLPGRLSSLSKPVSLPPTPSSPKVGVYRPMTSKSNGGVAYCYNAQKLNNATGPVTFNMPFASVLPLAVSVSCDLGTASAYVASLPQPCSQKRHLEEDYSCLTEHSAKRRSYF</sequence>